<proteinExistence type="predicted"/>
<sequence length="138" mass="15063">MMVSKKKMGRPSKLTVSLEKAKAYLMGEYKTVGDVVPNIAGLACYLNISRSTIYEWSSSSNVEFSDIVEGILALQENKLLNSGLKGEFNPTITKLMLSKHGYADKQETELSGKAGGAIKTDNKISIEFIGIPQRESAN</sequence>
<accession>Q9T1T1</accession>
<organismHost>
    <name type="scientific">Escherichia coli</name>
    <dbReference type="NCBI Taxonomy" id="562"/>
</organismHost>
<name>VP17_BPAPS</name>
<protein>
    <recommendedName>
        <fullName>Putative protein p17</fullName>
    </recommendedName>
</protein>
<reference key="1">
    <citation type="journal article" date="1999" name="Virology">
        <title>Isolation and characterization of APSE-1, a bacteriophage infecting the secondary endosymbiont of acyrthosiphon pisum.</title>
        <authorList>
            <person name="van der Wilk F."/>
            <person name="Dullemans A.M."/>
            <person name="Verbeek M."/>
            <person name="van den Heuvel J.F.J.M."/>
        </authorList>
    </citation>
    <scope>NUCLEOTIDE SEQUENCE [LARGE SCALE GENOMIC DNA]</scope>
</reference>
<keyword id="KW-1185">Reference proteome</keyword>
<organism>
    <name type="scientific">Acyrthosiphon pisum secondary endosymbiont phage 1</name>
    <name type="common">Bacteriophage APSE-1</name>
    <dbReference type="NCBI Taxonomy" id="2682836"/>
    <lineage>
        <taxon>Viruses</taxon>
        <taxon>Duplodnaviria</taxon>
        <taxon>Heunggongvirae</taxon>
        <taxon>Uroviricota</taxon>
        <taxon>Caudoviricetes</taxon>
        <taxon>Sendosyvirus</taxon>
        <taxon>Sendosyvirus APSE1</taxon>
    </lineage>
</organism>
<feature type="chain" id="PRO_0000077860" description="Putative protein p17">
    <location>
        <begin position="1"/>
        <end position="138"/>
    </location>
</feature>
<gene>
    <name type="primary">17</name>
</gene>
<dbReference type="EMBL" id="AF157835">
    <property type="protein sequence ID" value="AAF03960.1"/>
    <property type="molecule type" value="Genomic_DNA"/>
</dbReference>
<dbReference type="RefSeq" id="NP_050978.1">
    <property type="nucleotide sequence ID" value="NC_000935.1"/>
</dbReference>
<dbReference type="SMR" id="Q9T1T1"/>
<dbReference type="KEGG" id="vg:1262311"/>
<dbReference type="Proteomes" id="UP000000853">
    <property type="component" value="Genome"/>
</dbReference>
<dbReference type="Gene3D" id="1.10.132.80">
    <property type="match status" value="1"/>
</dbReference>
<dbReference type="InterPro" id="IPR032066">
    <property type="entry name" value="GP3_package"/>
</dbReference>
<dbReference type="Pfam" id="PF16677">
    <property type="entry name" value="GP3_package"/>
    <property type="match status" value="1"/>
</dbReference>